<name>CH60_BACC0</name>
<keyword id="KW-0067">ATP-binding</keyword>
<keyword id="KW-0143">Chaperone</keyword>
<keyword id="KW-0963">Cytoplasm</keyword>
<keyword id="KW-0413">Isomerase</keyword>
<keyword id="KW-0547">Nucleotide-binding</keyword>
<evidence type="ECO:0000255" key="1">
    <source>
        <dbReference type="HAMAP-Rule" id="MF_00600"/>
    </source>
</evidence>
<proteinExistence type="inferred from homology"/>
<organism>
    <name type="scientific">Bacillus cereus (strain AH820)</name>
    <dbReference type="NCBI Taxonomy" id="405535"/>
    <lineage>
        <taxon>Bacteria</taxon>
        <taxon>Bacillati</taxon>
        <taxon>Bacillota</taxon>
        <taxon>Bacilli</taxon>
        <taxon>Bacillales</taxon>
        <taxon>Bacillaceae</taxon>
        <taxon>Bacillus</taxon>
        <taxon>Bacillus cereus group</taxon>
    </lineage>
</organism>
<sequence>MAKDIKFSEEARRSMLRGVDTLANAVKVTLGPKGRNVVLEKKFGSPLITNDGVTIAKEIELEDAFENMGAKLVAEVASKTNDVAGDGTTTATVLAQAMIREGLKNVTAGANPMGLRKGIEKAVVAAVEELKTISKPIEGKSSIAQVAAISAADEEVGQLIAEAMERVGNDGVITLEESKGFTTELDVVEGMQFDRGYASPYMITDSDKMEAVLDNPYILITDKKISNIQEILPVLEQVVQQGKPLLIIAEDVEGEALATLVVNKLRGTFNVVAVKAPGFGDRRKAMLEDIAILTGGEVITEELGRDLKSATVESLGRAGKVVVTKENTTVVEGVGSTEQIEARIGQIRAQLEETTSEFDREKLQERLAKLAGGVAVIKVGAATETELKERKLRIEDALNSTRAAVEEGIVAGGGTSLMNVYTKVASIVAEGDEATGINIVLRALEEPVRQIAINAGLEGSVVVERLKGEKVGVGFNAATGEWVNMLETGIVDPAKVTRSALQNAASVAAMFLTTEAVVADKPEPNAPAMPDMGGMGMGGMGGMM</sequence>
<protein>
    <recommendedName>
        <fullName evidence="1">Chaperonin GroEL</fullName>
        <ecNumber evidence="1">5.6.1.7</ecNumber>
    </recommendedName>
    <alternativeName>
        <fullName evidence="1">60 kDa chaperonin</fullName>
    </alternativeName>
    <alternativeName>
        <fullName evidence="1">Chaperonin-60</fullName>
        <shortName evidence="1">Cpn60</shortName>
    </alternativeName>
</protein>
<feature type="chain" id="PRO_1000129971" description="Chaperonin GroEL">
    <location>
        <begin position="1"/>
        <end position="544"/>
    </location>
</feature>
<feature type="binding site" evidence="1">
    <location>
        <begin position="29"/>
        <end position="32"/>
    </location>
    <ligand>
        <name>ATP</name>
        <dbReference type="ChEBI" id="CHEBI:30616"/>
    </ligand>
</feature>
<feature type="binding site" evidence="1">
    <location>
        <begin position="86"/>
        <end position="90"/>
    </location>
    <ligand>
        <name>ATP</name>
        <dbReference type="ChEBI" id="CHEBI:30616"/>
    </ligand>
</feature>
<feature type="binding site" evidence="1">
    <location>
        <position position="413"/>
    </location>
    <ligand>
        <name>ATP</name>
        <dbReference type="ChEBI" id="CHEBI:30616"/>
    </ligand>
</feature>
<feature type="binding site" evidence="1">
    <location>
        <begin position="476"/>
        <end position="478"/>
    </location>
    <ligand>
        <name>ATP</name>
        <dbReference type="ChEBI" id="CHEBI:30616"/>
    </ligand>
</feature>
<feature type="binding site" evidence="1">
    <location>
        <position position="492"/>
    </location>
    <ligand>
        <name>ATP</name>
        <dbReference type="ChEBI" id="CHEBI:30616"/>
    </ligand>
</feature>
<accession>B7JM60</accession>
<gene>
    <name evidence="1" type="primary">groEL</name>
    <name evidence="1" type="synonym">groL</name>
    <name type="ordered locus">BCAH820_0293</name>
</gene>
<dbReference type="EC" id="5.6.1.7" evidence="1"/>
<dbReference type="EMBL" id="CP001283">
    <property type="protein sequence ID" value="ACK87311.1"/>
    <property type="molecule type" value="Genomic_DNA"/>
</dbReference>
<dbReference type="RefSeq" id="WP_001029999.1">
    <property type="nucleotide sequence ID" value="NC_011773.1"/>
</dbReference>
<dbReference type="SMR" id="B7JM60"/>
<dbReference type="GeneID" id="69534143"/>
<dbReference type="KEGG" id="bcu:BCAH820_0293"/>
<dbReference type="HOGENOM" id="CLU_016503_3_0_9"/>
<dbReference type="Proteomes" id="UP000001363">
    <property type="component" value="Chromosome"/>
</dbReference>
<dbReference type="GO" id="GO:0005737">
    <property type="term" value="C:cytoplasm"/>
    <property type="evidence" value="ECO:0007669"/>
    <property type="project" value="UniProtKB-SubCell"/>
</dbReference>
<dbReference type="GO" id="GO:0005524">
    <property type="term" value="F:ATP binding"/>
    <property type="evidence" value="ECO:0007669"/>
    <property type="project" value="UniProtKB-UniRule"/>
</dbReference>
<dbReference type="GO" id="GO:0140662">
    <property type="term" value="F:ATP-dependent protein folding chaperone"/>
    <property type="evidence" value="ECO:0007669"/>
    <property type="project" value="InterPro"/>
</dbReference>
<dbReference type="GO" id="GO:0016853">
    <property type="term" value="F:isomerase activity"/>
    <property type="evidence" value="ECO:0007669"/>
    <property type="project" value="UniProtKB-KW"/>
</dbReference>
<dbReference type="GO" id="GO:0051082">
    <property type="term" value="F:unfolded protein binding"/>
    <property type="evidence" value="ECO:0007669"/>
    <property type="project" value="UniProtKB-UniRule"/>
</dbReference>
<dbReference type="GO" id="GO:0042026">
    <property type="term" value="P:protein refolding"/>
    <property type="evidence" value="ECO:0007669"/>
    <property type="project" value="UniProtKB-UniRule"/>
</dbReference>
<dbReference type="CDD" id="cd03344">
    <property type="entry name" value="GroEL"/>
    <property type="match status" value="1"/>
</dbReference>
<dbReference type="FunFam" id="1.10.560.10:FF:000001">
    <property type="entry name" value="60 kDa chaperonin"/>
    <property type="match status" value="1"/>
</dbReference>
<dbReference type="FunFam" id="3.50.7.10:FF:000001">
    <property type="entry name" value="60 kDa chaperonin"/>
    <property type="match status" value="1"/>
</dbReference>
<dbReference type="Gene3D" id="3.50.7.10">
    <property type="entry name" value="GroEL"/>
    <property type="match status" value="1"/>
</dbReference>
<dbReference type="Gene3D" id="1.10.560.10">
    <property type="entry name" value="GroEL-like equatorial domain"/>
    <property type="match status" value="1"/>
</dbReference>
<dbReference type="Gene3D" id="3.30.260.10">
    <property type="entry name" value="TCP-1-like chaperonin intermediate domain"/>
    <property type="match status" value="1"/>
</dbReference>
<dbReference type="HAMAP" id="MF_00600">
    <property type="entry name" value="CH60"/>
    <property type="match status" value="1"/>
</dbReference>
<dbReference type="InterPro" id="IPR018370">
    <property type="entry name" value="Chaperonin_Cpn60_CS"/>
</dbReference>
<dbReference type="InterPro" id="IPR001844">
    <property type="entry name" value="Cpn60/GroEL"/>
</dbReference>
<dbReference type="InterPro" id="IPR002423">
    <property type="entry name" value="Cpn60/GroEL/TCP-1"/>
</dbReference>
<dbReference type="InterPro" id="IPR027409">
    <property type="entry name" value="GroEL-like_apical_dom_sf"/>
</dbReference>
<dbReference type="InterPro" id="IPR027413">
    <property type="entry name" value="GROEL-like_equatorial_sf"/>
</dbReference>
<dbReference type="InterPro" id="IPR027410">
    <property type="entry name" value="TCP-1-like_intermed_sf"/>
</dbReference>
<dbReference type="NCBIfam" id="TIGR02348">
    <property type="entry name" value="GroEL"/>
    <property type="match status" value="1"/>
</dbReference>
<dbReference type="NCBIfam" id="NF000592">
    <property type="entry name" value="PRK00013.1"/>
    <property type="match status" value="1"/>
</dbReference>
<dbReference type="NCBIfam" id="NF009487">
    <property type="entry name" value="PRK12849.1"/>
    <property type="match status" value="1"/>
</dbReference>
<dbReference type="NCBIfam" id="NF009488">
    <property type="entry name" value="PRK12850.1"/>
    <property type="match status" value="1"/>
</dbReference>
<dbReference type="NCBIfam" id="NF009489">
    <property type="entry name" value="PRK12851.1"/>
    <property type="match status" value="1"/>
</dbReference>
<dbReference type="PANTHER" id="PTHR45633">
    <property type="entry name" value="60 KDA HEAT SHOCK PROTEIN, MITOCHONDRIAL"/>
    <property type="match status" value="1"/>
</dbReference>
<dbReference type="Pfam" id="PF00118">
    <property type="entry name" value="Cpn60_TCP1"/>
    <property type="match status" value="1"/>
</dbReference>
<dbReference type="PRINTS" id="PR00298">
    <property type="entry name" value="CHAPERONIN60"/>
</dbReference>
<dbReference type="SUPFAM" id="SSF52029">
    <property type="entry name" value="GroEL apical domain-like"/>
    <property type="match status" value="1"/>
</dbReference>
<dbReference type="SUPFAM" id="SSF48592">
    <property type="entry name" value="GroEL equatorial domain-like"/>
    <property type="match status" value="1"/>
</dbReference>
<dbReference type="SUPFAM" id="SSF54849">
    <property type="entry name" value="GroEL-intermediate domain like"/>
    <property type="match status" value="1"/>
</dbReference>
<dbReference type="PROSITE" id="PS00296">
    <property type="entry name" value="CHAPERONINS_CPN60"/>
    <property type="match status" value="1"/>
</dbReference>
<reference key="1">
    <citation type="submission" date="2008-10" db="EMBL/GenBank/DDBJ databases">
        <title>Genome sequence of Bacillus cereus AH820.</title>
        <authorList>
            <person name="Dodson R.J."/>
            <person name="Durkin A.S."/>
            <person name="Rosovitz M.J."/>
            <person name="Rasko D.A."/>
            <person name="Hoffmaster A."/>
            <person name="Ravel J."/>
            <person name="Sutton G."/>
        </authorList>
    </citation>
    <scope>NUCLEOTIDE SEQUENCE [LARGE SCALE GENOMIC DNA]</scope>
    <source>
        <strain>AH820</strain>
    </source>
</reference>
<comment type="function">
    <text evidence="1">Together with its co-chaperonin GroES, plays an essential role in assisting protein folding. The GroEL-GroES system forms a nano-cage that allows encapsulation of the non-native substrate proteins and provides a physical environment optimized to promote and accelerate protein folding.</text>
</comment>
<comment type="catalytic activity">
    <reaction evidence="1">
        <text>ATP + H2O + a folded polypeptide = ADP + phosphate + an unfolded polypeptide.</text>
        <dbReference type="EC" id="5.6.1.7"/>
    </reaction>
</comment>
<comment type="subunit">
    <text evidence="1">Forms a cylinder of 14 subunits composed of two heptameric rings stacked back-to-back. Interacts with the co-chaperonin GroES.</text>
</comment>
<comment type="subcellular location">
    <subcellularLocation>
        <location evidence="1">Cytoplasm</location>
    </subcellularLocation>
</comment>
<comment type="similarity">
    <text evidence="1">Belongs to the chaperonin (HSP60) family.</text>
</comment>